<proteinExistence type="evidence at transcript level"/>
<comment type="function">
    <text evidence="1 2">Forms a nonselective cation channel. Can function as a homotetrameric ion channel or can form heteromer with PKD1. Displays distinct function depending on its subcellular localization and regulation by its binding partners. Functions as a cation channel, with a preference for monovalent cations over divalent cations that allows K(+), Na(+) and Ca(2+) influx, with low selectivity for Ca(2+). Involved in fluid-flow mechanosensation in the primary cilium in renal epithelium (By similarity). In the endoplasmic reticulum, likely functions as a K(+) channel to facilitate Ca(2+) release (By similarity). The heterotetrameric PKD1/PKD2 channel has higher Ca(2+) permeability than homomeric PKD2 channel and acts as a primarily Ca(2+)-permeable channel. Interacts with and acts as a regulator of a number of other channels, such as TRPV4, TRPC1, IP3R, RYR2, ultimately further affecting intracellular signaling, to modulate intracellular Ca(2+) signaling. Together with TRPV4, forms mechano- and thermosensitive channels in cilium (By similarity). In cardiomyocytes, PKD2 modulates Ca(2+) release from stimulated RYR2 receptors through direct association. Also involved in left-right axis specification via its role in sensing nodal flow; forms a complex with PKD1L1 in cilia to facilitate flow detection in left-right patterning. Acts as a regulator of cilium length together with PKD1. Mediates systemic blood pressure and contributes to the myogenic response in cerebral arteries though vasoconstriction (By similarity).</text>
</comment>
<comment type="catalytic activity">
    <reaction evidence="1">
        <text>K(+)(in) = K(+)(out)</text>
        <dbReference type="Rhea" id="RHEA:29463"/>
        <dbReference type="ChEBI" id="CHEBI:29103"/>
    </reaction>
</comment>
<comment type="catalytic activity">
    <reaction evidence="1">
        <text>Na(+)(in) = Na(+)(out)</text>
        <dbReference type="Rhea" id="RHEA:34963"/>
        <dbReference type="ChEBI" id="CHEBI:29101"/>
    </reaction>
</comment>
<comment type="catalytic activity">
    <reaction evidence="1">
        <text>Ca(2+)(in) = Ca(2+)(out)</text>
        <dbReference type="Rhea" id="RHEA:29671"/>
        <dbReference type="ChEBI" id="CHEBI:29108"/>
    </reaction>
</comment>
<comment type="activity regulation">
    <text evidence="1 2">Channel activity is regulated by phosphorylation. Channel activity is regulated by intracellular Ca(2+) (By similarity). At the endoplasmic reticulum membrane (ER), TMEM33 enhances its channel activity (By similarity). TMEM120A inhibits the channel activity of PKD2, and mediates mechanosensitivity of the PKD2-TMEM120A channel complex. PKD1/PKD2 complex on the plasma membrane is activated by PKD1 N-terminus (By similarity).</text>
</comment>
<comment type="subunit">
    <text evidence="1 2">Homotetramer. Component of the heterotetrameric polycystin channel complex with PKD1; the tetramer contains one PKD1 chain and three PKD2 chains (By similarity). Isoform 1 interacts with PKD1 while isoform 3 does not (By similarity). Interacts with PKD1L1; probably forms a Ca(2+) channel (By similarity). Interacts with CD2AP. Interacts with HAX1 (By similarity). Interacts with NEK8 (By similarity). Part of a complex containing AKAP5, ADCY5, ADCY6 and PDE4C (By similarity). Interacts (via C-terminus) with TRPV4 (via C-terminus). Interacts (via C-terminal acidic region) with PACS1 and PACS2; these interactions retain the protein in the endoplasmic reticulum and prevent trafficking to the cell membrane (By similarity). Interacts with TMEM33 (By similarity). Form a heterotetramer with TRPC1 with a 2:2 stoichiometry; has distinct channel properties separate from PKD2 or TRPC1 homomers alone. Interacts with TMEM120A; TMEM120A inhibits PKD2 channel activity through the physical association of PKD2 with TMEM120A (By similarity). Interacts (via N-terminus) with RYR2; regulates RYR2 channel activity (By similarity).</text>
</comment>
<comment type="subcellular location">
    <subcellularLocation>
        <location evidence="2">Cell projection</location>
        <location evidence="2">Cilium membrane</location>
        <topology evidence="2">Multi-pass membrane protein</topology>
    </subcellularLocation>
    <subcellularLocation>
        <location evidence="2">Endoplasmic reticulum membrane</location>
        <topology evidence="2">Multi-pass membrane protein</topology>
    </subcellularLocation>
    <subcellularLocation>
        <location evidence="2">Cell membrane</location>
        <topology evidence="2">Multi-pass membrane protein</topology>
    </subcellularLocation>
    <subcellularLocation>
        <location evidence="2">Basolateral cell membrane</location>
    </subcellularLocation>
    <subcellularLocation>
        <location evidence="2">Cytoplasmic vesicle membrane</location>
    </subcellularLocation>
    <subcellularLocation>
        <location evidence="1">Golgi apparatus</location>
    </subcellularLocation>
    <subcellularLocation>
        <location evidence="2">Vesicle</location>
    </subcellularLocation>
    <subcellularLocation>
        <location evidence="2">Secreted</location>
        <location evidence="2">Extracellular exosome</location>
    </subcellularLocation>
    <text evidence="1 2">PKD2 localization to the plasma and ciliary membranes requires PKD1. PKD1:PKD2 interaction is required to reach the Golgi apparatus form endoplasmic reticulum and then traffic to the cilia (By similarity). Retained in the endoplasmic reticulum by interaction with PACS1 and PACS2. Detected on kidney tubule basolateral membranes and basal cytoplasmic vesicles. Cell surface and cilium localization requires GANAB. Detected on migrasomes and on extracellular exosomes in urine (By similarity). Preferentially localized to the dorsal side of immotile cilia (By similarity).</text>
</comment>
<comment type="tissue specificity">
    <text>Expressed in mesenchymally derived structures in the developing embryo at day 12.5. In adult, mostly expressed in kidney.</text>
</comment>
<comment type="PTM">
    <text evidence="2">N-glycosylated. The four subunits in a tetramer probably differ in the extent of glycosylation; simultaneous glycosylation of all experimentally validated sites would probably create steric hindrance.</text>
</comment>
<comment type="PTM">
    <text evidence="2">Phosphorylated. Phosphorylation is important for protein function; a mutant that lacks the N-terminal phosphorylation sites cannot complement a zebrafish pkd2-deficient mutant. PKD-mediated phosphorylation at the C-terminus regulates its function in the release of Ca(2+) stores from the endoplasmic reticulum. Phosphorylation at Ser-814 regulates PKD2 trafficking. Phosphorylation at Ser-76 is required for PKD2 trafficking to or retention at the lateral plasma membrane. Phosphorylation at Ser-803, Ser-814 and Ser-831 regulates PKD2 channel activity.</text>
</comment>
<comment type="PTM">
    <text evidence="1">Sumoylated by SUMO1; sumoylation regulates PKD2 membrane recycling and is necessary for intravascular pressure-induced arterial contractility.</text>
</comment>
<comment type="similarity">
    <text evidence="6">Belongs to the polycystin family.</text>
</comment>
<comment type="caution">
    <text evidence="2">A study shown that cation channel activity is activatable by Wnt molecules (By similarity). However, this finding remains debatable because the agonist role of Wnt molecules has not been reproduced by an other study, that show that, when PKD2 is expressed in either with or without PKD1, no significant whole-cell current is activated by Wnt proteins (By similarity).</text>
</comment>
<feature type="chain" id="PRO_0000243983" description="Polycystin-2">
    <location>
        <begin position="1"/>
        <end position="970"/>
    </location>
</feature>
<feature type="topological domain" description="Cytoplasmic" evidence="2">
    <location>
        <begin position="1"/>
        <end position="221"/>
    </location>
</feature>
<feature type="transmembrane region" description="Helical; Name=S1" evidence="2">
    <location>
        <begin position="222"/>
        <end position="243"/>
    </location>
</feature>
<feature type="topological domain" description="Extracellular" evidence="2">
    <location>
        <begin position="244"/>
        <end position="470"/>
    </location>
</feature>
<feature type="transmembrane region" description="Helical; Name=S2" evidence="2">
    <location>
        <begin position="471"/>
        <end position="491"/>
    </location>
</feature>
<feature type="topological domain" description="Cytoplasmic" evidence="2">
    <location>
        <begin position="492"/>
        <end position="507"/>
    </location>
</feature>
<feature type="transmembrane region" description="Helical; Name=S3" evidence="2">
    <location>
        <begin position="508"/>
        <end position="528"/>
    </location>
</feature>
<feature type="topological domain" description="Extracellular" evidence="2">
    <location>
        <begin position="529"/>
        <end position="554"/>
    </location>
</feature>
<feature type="transmembrane region" description="Helical; Name=S4" evidence="2">
    <location>
        <begin position="555"/>
        <end position="575"/>
    </location>
</feature>
<feature type="topological domain" description="Cytoplasmic" evidence="2">
    <location>
        <begin position="576"/>
        <end position="599"/>
    </location>
</feature>
<feature type="transmembrane region" description="Helical; Name=5" evidence="2">
    <location>
        <begin position="600"/>
        <end position="621"/>
    </location>
</feature>
<feature type="topological domain" description="Extracellular" evidence="2">
    <location>
        <begin position="622"/>
        <end position="633"/>
    </location>
</feature>
<feature type="intramembrane region" description="Pore-forming" evidence="2">
    <location>
        <begin position="634"/>
        <end position="648"/>
    </location>
</feature>
<feature type="topological domain" description="Extracellular" evidence="2">
    <location>
        <begin position="649"/>
        <end position="656"/>
    </location>
</feature>
<feature type="transmembrane region" description="Helical; Name=S6" evidence="2">
    <location>
        <begin position="657"/>
        <end position="677"/>
    </location>
</feature>
<feature type="topological domain" description="Cytoplasmic" evidence="2">
    <location>
        <begin position="678"/>
        <end position="970"/>
    </location>
</feature>
<feature type="domain" description="EF-hand" evidence="4">
    <location>
        <begin position="750"/>
        <end position="785"/>
    </location>
</feature>
<feature type="region of interest" description="Disordered" evidence="5">
    <location>
        <begin position="1"/>
        <end position="182"/>
    </location>
</feature>
<feature type="region of interest" description="Disordered" evidence="5">
    <location>
        <begin position="766"/>
        <end position="833"/>
    </location>
</feature>
<feature type="region of interest" description="Linker" evidence="2">
    <location>
        <begin position="805"/>
        <end position="824"/>
    </location>
</feature>
<feature type="region of interest" description="Important for interaction with PACS1 and PACS2" evidence="2">
    <location>
        <begin position="812"/>
        <end position="823"/>
    </location>
</feature>
<feature type="region of interest" description="Disordered" evidence="5">
    <location>
        <begin position="921"/>
        <end position="970"/>
    </location>
</feature>
<feature type="coiled-coil region" evidence="2">
    <location>
        <begin position="835"/>
        <end position="874"/>
    </location>
</feature>
<feature type="short sequence motif" description="Selectivity filter" evidence="2">
    <location>
        <begin position="643"/>
        <end position="645"/>
    </location>
</feature>
<feature type="compositionally biased region" description="Polar residues" evidence="5">
    <location>
        <begin position="1"/>
        <end position="11"/>
    </location>
</feature>
<feature type="compositionally biased region" description="Low complexity" evidence="5">
    <location>
        <begin position="25"/>
        <end position="45"/>
    </location>
</feature>
<feature type="compositionally biased region" description="Basic and acidic residues" evidence="5">
    <location>
        <begin position="47"/>
        <end position="60"/>
    </location>
</feature>
<feature type="compositionally biased region" description="Low complexity" evidence="5">
    <location>
        <begin position="62"/>
        <end position="83"/>
    </location>
</feature>
<feature type="compositionally biased region" description="Acidic residues" evidence="5">
    <location>
        <begin position="95"/>
        <end position="109"/>
    </location>
</feature>
<feature type="compositionally biased region" description="Low complexity" evidence="5">
    <location>
        <begin position="125"/>
        <end position="138"/>
    </location>
</feature>
<feature type="compositionally biased region" description="Gly residues" evidence="5">
    <location>
        <begin position="139"/>
        <end position="148"/>
    </location>
</feature>
<feature type="compositionally biased region" description="Basic and acidic residues" evidence="5">
    <location>
        <begin position="772"/>
        <end position="797"/>
    </location>
</feature>
<feature type="compositionally biased region" description="Low complexity" evidence="5">
    <location>
        <begin position="798"/>
        <end position="809"/>
    </location>
</feature>
<feature type="compositionally biased region" description="Low complexity" evidence="5">
    <location>
        <begin position="940"/>
        <end position="956"/>
    </location>
</feature>
<feature type="binding site" evidence="2">
    <location>
        <position position="559"/>
    </location>
    <ligand>
        <name>cholesterol</name>
        <dbReference type="ChEBI" id="CHEBI:16113"/>
    </ligand>
</feature>
<feature type="binding site" evidence="2">
    <location>
        <position position="643"/>
    </location>
    <ligand>
        <name>Ca(2+)</name>
        <dbReference type="ChEBI" id="CHEBI:29108"/>
        <label>1</label>
        <note>ligand shared between homotetrameric partners</note>
    </ligand>
</feature>
<feature type="binding site" evidence="2">
    <location>
        <position position="765"/>
    </location>
    <ligand>
        <name>Ca(2+)</name>
        <dbReference type="ChEBI" id="CHEBI:29108"/>
        <label>2</label>
    </ligand>
</feature>
<feature type="binding site" evidence="2">
    <location>
        <position position="767"/>
    </location>
    <ligand>
        <name>Ca(2+)</name>
        <dbReference type="ChEBI" id="CHEBI:29108"/>
        <label>2</label>
    </ligand>
</feature>
<feature type="binding site" evidence="2">
    <location>
        <position position="769"/>
    </location>
    <ligand>
        <name>Ca(2+)</name>
        <dbReference type="ChEBI" id="CHEBI:29108"/>
        <label>2</label>
    </ligand>
</feature>
<feature type="binding site" evidence="2">
    <location>
        <position position="771"/>
    </location>
    <ligand>
        <name>Ca(2+)</name>
        <dbReference type="ChEBI" id="CHEBI:29108"/>
        <label>2</label>
    </ligand>
</feature>
<feature type="binding site" evidence="2">
    <location>
        <position position="776"/>
    </location>
    <ligand>
        <name>Ca(2+)</name>
        <dbReference type="ChEBI" id="CHEBI:29108"/>
        <label>2</label>
    </ligand>
</feature>
<feature type="modified residue" description="Phosphoserine" evidence="2">
    <location>
        <position position="76"/>
    </location>
</feature>
<feature type="modified residue" description="Phosphoserine" evidence="2">
    <location>
        <position position="80"/>
    </location>
</feature>
<feature type="modified residue" description="Omega-N-methylarginine" evidence="1">
    <location>
        <position position="139"/>
    </location>
</feature>
<feature type="modified residue" description="Phosphoserine" evidence="2">
    <location>
        <position position="803"/>
    </location>
</feature>
<feature type="modified residue" description="Phosphoserine" evidence="1">
    <location>
        <position position="810"/>
    </location>
</feature>
<feature type="modified residue" description="Phosphoserine" evidence="2">
    <location>
        <position position="814"/>
    </location>
</feature>
<feature type="modified residue" description="Phosphoserine" evidence="2">
    <location>
        <position position="831"/>
    </location>
</feature>
<feature type="glycosylation site" description="N-linked (GlcNAc...) asparagine" evidence="3">
    <location>
        <position position="301"/>
    </location>
</feature>
<feature type="glycosylation site" description="N-linked (GlcNAc...) asparagine" evidence="3">
    <location>
        <position position="307"/>
    </location>
</feature>
<feature type="glycosylation site" description="N-linked (GlcNAc...) asparagine" evidence="3">
    <location>
        <position position="330"/>
    </location>
</feature>
<feature type="glycosylation site" description="N-linked (GlcNAc...) asparagine" evidence="3">
    <location>
        <position position="364"/>
    </location>
</feature>
<feature type="glycosylation site" description="N-linked (GlcNAc...) asparagine" evidence="3">
    <location>
        <position position="377"/>
    </location>
</feature>
<feature type="disulfide bond" evidence="2">
    <location>
        <begin position="333"/>
        <end position="346"/>
    </location>
</feature>
<evidence type="ECO:0000250" key="1">
    <source>
        <dbReference type="UniProtKB" id="O35245"/>
    </source>
</evidence>
<evidence type="ECO:0000250" key="2">
    <source>
        <dbReference type="UniProtKB" id="Q13563"/>
    </source>
</evidence>
<evidence type="ECO:0000255" key="3"/>
<evidence type="ECO:0000255" key="4">
    <source>
        <dbReference type="PROSITE-ProRule" id="PRU00448"/>
    </source>
</evidence>
<evidence type="ECO:0000256" key="5">
    <source>
        <dbReference type="SAM" id="MobiDB-lite"/>
    </source>
</evidence>
<evidence type="ECO:0000305" key="6"/>
<organism>
    <name type="scientific">Bos taurus</name>
    <name type="common">Bovine</name>
    <dbReference type="NCBI Taxonomy" id="9913"/>
    <lineage>
        <taxon>Eukaryota</taxon>
        <taxon>Metazoa</taxon>
        <taxon>Chordata</taxon>
        <taxon>Craniata</taxon>
        <taxon>Vertebrata</taxon>
        <taxon>Euteleostomi</taxon>
        <taxon>Mammalia</taxon>
        <taxon>Eutheria</taxon>
        <taxon>Laurasiatheria</taxon>
        <taxon>Artiodactyla</taxon>
        <taxon>Ruminantia</taxon>
        <taxon>Pecora</taxon>
        <taxon>Bovidae</taxon>
        <taxon>Bovinae</taxon>
        <taxon>Bos</taxon>
    </lineage>
</organism>
<protein>
    <recommendedName>
        <fullName>Polycystin-2</fullName>
    </recommendedName>
    <alternativeName>
        <fullName>Polycystic kidney disease 2 protein homolog</fullName>
    </alternativeName>
    <alternativeName>
        <fullName evidence="2">Transient receptor potential cation channel subfamily P member 2</fullName>
    </alternativeName>
</protein>
<keyword id="KW-0106">Calcium</keyword>
<keyword id="KW-0107">Calcium channel</keyword>
<keyword id="KW-0109">Calcium transport</keyword>
<keyword id="KW-1003">Cell membrane</keyword>
<keyword id="KW-0966">Cell projection</keyword>
<keyword id="KW-0175">Coiled coil</keyword>
<keyword id="KW-0968">Cytoplasmic vesicle</keyword>
<keyword id="KW-1015">Disulfide bond</keyword>
<keyword id="KW-0256">Endoplasmic reticulum</keyword>
<keyword id="KW-0325">Glycoprotein</keyword>
<keyword id="KW-0333">Golgi apparatus</keyword>
<keyword id="KW-0407">Ion channel</keyword>
<keyword id="KW-0406">Ion transport</keyword>
<keyword id="KW-0472">Membrane</keyword>
<keyword id="KW-0479">Metal-binding</keyword>
<keyword id="KW-0488">Methylation</keyword>
<keyword id="KW-0597">Phosphoprotein</keyword>
<keyword id="KW-0630">Potassium</keyword>
<keyword id="KW-0631">Potassium channel</keyword>
<keyword id="KW-0633">Potassium transport</keyword>
<keyword id="KW-1185">Reference proteome</keyword>
<keyword id="KW-0964">Secreted</keyword>
<keyword id="KW-0812">Transmembrane</keyword>
<keyword id="KW-1133">Transmembrane helix</keyword>
<keyword id="KW-0813">Transport</keyword>
<keyword id="KW-0832">Ubl conjugation</keyword>
<keyword id="KW-0851">Voltage-gated channel</keyword>
<gene>
    <name evidence="2" type="primary">PKD2</name>
    <name evidence="2" type="synonym">TRPP2</name>
</gene>
<name>PKD2_BOVIN</name>
<accession>Q4GZT3</accession>
<reference key="1">
    <citation type="journal article" date="2005" name="Genome Res.">
        <title>Identification of a missense mutation in the bovine ABCG2 gene with a major effect on the QTL on chromosome 6 affecting milk yield and composition in Holstein cattle.</title>
        <authorList>
            <person name="Cohen-Zinder M."/>
            <person name="Seroussi E."/>
            <person name="Larkin D.M."/>
            <person name="Loor J.J."/>
            <person name="Everts-van der Wind A."/>
            <person name="Lee J.-H."/>
            <person name="Drackley J.K."/>
            <person name="Band M.R."/>
            <person name="Hernandez A.G."/>
            <person name="Shani M."/>
            <person name="Lewin H.A."/>
            <person name="Weller J.I."/>
            <person name="Ron M."/>
        </authorList>
    </citation>
    <scope>NUCLEOTIDE SEQUENCE [GENOMIC DNA]</scope>
    <source>
        <strain>Holstein</strain>
    </source>
</reference>
<sequence length="970" mass="109789">MVNSSRVQPQQPGDARRSPAPRAPGPGRLMAGGAIAGAGLAAPGGLREQRGLEIEMERIRQAAARDPPAGASASPSPPLSSCSRQAWSRDNPGFEAEEEEEEEEVEGEEGGMVVEMDVEWRPGSRRSASSSAVSSAGARGRGLGGYHGAGHPSGRRRQREDQGPPSPSPAGGGDPLHRHLPLDGQHPRVAWAERLVRGLRGLWGTRLMEESSTDREKYLKSVLRELATYLLFLIVLCILTYGMMSSSVYYYTRIMSQLFLDTPVSKMEKTNFKTLSSMEDFWKFTEGALLDGLYWKTQPSNRTEADNRSFIYYENLLLGVPRIRQLRVRNGSCSIPLDLRDEIKECYDVYSVSSEDRAPFGPRNGTAWIYTSEKDLNGSSHWGMIATYSGAGYYLDLSRTREETAAQVANLKKNVWLDRGTRAIFIDFTVYNANINLFCVIRLLIEFPATGGVIPSWQFQPVKLIRYVTTFDFFLAACEIIFCLFILYYVVEEILEIRIHKLHYFRSFWNCLDVVIIVLSVVAIGINIYRTSNVEALLQFLEDQNTFPNFENLAYWQTQFNNIAAVIVFFVWIKLFKFINFNRTMSQLSTTMSRCAKDLFGFAIMFFIIFLAYAQLAYLVFGTQVDDFSTFQECIFTQFRIILGDINFAEIEEANRVLGPIYFTTFVFFMFFILLNMFLAIINDTYSEVKSDLAQQKAEMELSDLIRKGYHKALIKLKLKKNTVDDISESLRQGGGKLNFDELRQDLKGKGHTDAEIEAIFTKYDQDGDQELTEHEHQQMRDDLEKEREDLDLDHSSLPRPMSSRSFPRSLDDSEEEDDDDSGHSSRRRGSISSGVSYEEFQVLVRRVDRMEHSIGSIVSKIDAVIVKLEIMERAKLKRREVLGRLLDGVAEDERLGRDNEIHREQMERLVREELERWESDDAASQISHGLGTPLGLNGQPRPRSSRPSSSQSTEGMEGGGGNGSANIHV</sequence>
<dbReference type="EMBL" id="AJ871176">
    <property type="protein sequence ID" value="CAI38797.1"/>
    <property type="molecule type" value="Genomic_DNA"/>
</dbReference>
<dbReference type="RefSeq" id="NP_001039777.1">
    <property type="nucleotide sequence ID" value="NM_001046312.1"/>
</dbReference>
<dbReference type="BMRB" id="Q4GZT3"/>
<dbReference type="SMR" id="Q4GZT3"/>
<dbReference type="FunCoup" id="Q4GZT3">
    <property type="interactions" value="1132"/>
</dbReference>
<dbReference type="STRING" id="9913.ENSBTAP00000063046"/>
<dbReference type="GlyCosmos" id="Q4GZT3">
    <property type="glycosylation" value="5 sites, No reported glycans"/>
</dbReference>
<dbReference type="GlyGen" id="Q4GZT3">
    <property type="glycosylation" value="5 sites"/>
</dbReference>
<dbReference type="PaxDb" id="9913-ENSBTAP00000026682"/>
<dbReference type="GeneID" id="530393"/>
<dbReference type="KEGG" id="bta:530393"/>
<dbReference type="CTD" id="5311"/>
<dbReference type="VEuPathDB" id="HostDB:ENSBTAG00000020031"/>
<dbReference type="eggNOG" id="KOG3599">
    <property type="taxonomic scope" value="Eukaryota"/>
</dbReference>
<dbReference type="HOGENOM" id="CLU_012097_0_0_1"/>
<dbReference type="InParanoid" id="Q4GZT3"/>
<dbReference type="OrthoDB" id="444119at2759"/>
<dbReference type="TreeFam" id="TF316484"/>
<dbReference type="Reactome" id="R-BTA-5620916">
    <property type="pathway name" value="VxPx cargo-targeting to cilium"/>
</dbReference>
<dbReference type="Proteomes" id="UP000009136">
    <property type="component" value="Chromosome 6"/>
</dbReference>
<dbReference type="Bgee" id="ENSBTAG00000020031">
    <property type="expression patterns" value="Expressed in intramuscular adipose tissue and 105 other cell types or tissues"/>
</dbReference>
<dbReference type="GO" id="GO:0016323">
    <property type="term" value="C:basolateral plasma membrane"/>
    <property type="evidence" value="ECO:0007669"/>
    <property type="project" value="UniProtKB-SubCell"/>
</dbReference>
<dbReference type="GO" id="GO:0034703">
    <property type="term" value="C:cation channel complex"/>
    <property type="evidence" value="ECO:0000250"/>
    <property type="project" value="UniProtKB"/>
</dbReference>
<dbReference type="GO" id="GO:0060170">
    <property type="term" value="C:ciliary membrane"/>
    <property type="evidence" value="ECO:0007669"/>
    <property type="project" value="UniProtKB-SubCell"/>
</dbReference>
<dbReference type="GO" id="GO:0005929">
    <property type="term" value="C:cilium"/>
    <property type="evidence" value="ECO:0000250"/>
    <property type="project" value="UniProtKB"/>
</dbReference>
<dbReference type="GO" id="GO:0030659">
    <property type="term" value="C:cytoplasmic vesicle membrane"/>
    <property type="evidence" value="ECO:0007669"/>
    <property type="project" value="UniProtKB-SubCell"/>
</dbReference>
<dbReference type="GO" id="GO:0005783">
    <property type="term" value="C:endoplasmic reticulum"/>
    <property type="evidence" value="ECO:0000250"/>
    <property type="project" value="UniProtKB"/>
</dbReference>
<dbReference type="GO" id="GO:0005789">
    <property type="term" value="C:endoplasmic reticulum membrane"/>
    <property type="evidence" value="ECO:0007669"/>
    <property type="project" value="UniProtKB-SubCell"/>
</dbReference>
<dbReference type="GO" id="GO:0070062">
    <property type="term" value="C:extracellular exosome"/>
    <property type="evidence" value="ECO:0000250"/>
    <property type="project" value="UniProtKB"/>
</dbReference>
<dbReference type="GO" id="GO:0005794">
    <property type="term" value="C:Golgi apparatus"/>
    <property type="evidence" value="ECO:0000250"/>
    <property type="project" value="UniProtKB"/>
</dbReference>
<dbReference type="GO" id="GO:0016020">
    <property type="term" value="C:membrane"/>
    <property type="evidence" value="ECO:0000318"/>
    <property type="project" value="GO_Central"/>
</dbReference>
<dbReference type="GO" id="GO:0140494">
    <property type="term" value="C:migrasome"/>
    <property type="evidence" value="ECO:0000250"/>
    <property type="project" value="UniProtKB"/>
</dbReference>
<dbReference type="GO" id="GO:0005886">
    <property type="term" value="C:plasma membrane"/>
    <property type="evidence" value="ECO:0000250"/>
    <property type="project" value="UniProtKB"/>
</dbReference>
<dbReference type="GO" id="GO:0002133">
    <property type="term" value="C:polycystin complex"/>
    <property type="evidence" value="ECO:0000250"/>
    <property type="project" value="UniProtKB"/>
</dbReference>
<dbReference type="GO" id="GO:0005262">
    <property type="term" value="F:calcium channel activity"/>
    <property type="evidence" value="ECO:0000250"/>
    <property type="project" value="UniProtKB"/>
</dbReference>
<dbReference type="GO" id="GO:0005509">
    <property type="term" value="F:calcium ion binding"/>
    <property type="evidence" value="ECO:0000318"/>
    <property type="project" value="GO_Central"/>
</dbReference>
<dbReference type="GO" id="GO:0005261">
    <property type="term" value="F:monoatomic cation channel activity"/>
    <property type="evidence" value="ECO:0000250"/>
    <property type="project" value="UniProtKB"/>
</dbReference>
<dbReference type="GO" id="GO:0051371">
    <property type="term" value="F:muscle alpha-actinin binding"/>
    <property type="evidence" value="ECO:0000318"/>
    <property type="project" value="GO_Central"/>
</dbReference>
<dbReference type="GO" id="GO:0015271">
    <property type="term" value="F:outward rectifier potassium channel activity"/>
    <property type="evidence" value="ECO:0000250"/>
    <property type="project" value="UniProtKB"/>
</dbReference>
<dbReference type="GO" id="GO:0005267">
    <property type="term" value="F:potassium channel activity"/>
    <property type="evidence" value="ECO:0000318"/>
    <property type="project" value="GO_Central"/>
</dbReference>
<dbReference type="GO" id="GO:0005102">
    <property type="term" value="F:signaling receptor binding"/>
    <property type="evidence" value="ECO:0000318"/>
    <property type="project" value="GO_Central"/>
</dbReference>
<dbReference type="GO" id="GO:0005245">
    <property type="term" value="F:voltage-gated calcium channel activity"/>
    <property type="evidence" value="ECO:0000318"/>
    <property type="project" value="GO_Central"/>
</dbReference>
<dbReference type="GO" id="GO:0005248">
    <property type="term" value="F:voltage-gated sodium channel activity"/>
    <property type="evidence" value="ECO:0000318"/>
    <property type="project" value="GO_Central"/>
</dbReference>
<dbReference type="GO" id="GO:0070588">
    <property type="term" value="P:calcium ion transmembrane transport"/>
    <property type="evidence" value="ECO:0000250"/>
    <property type="project" value="UniProtKB"/>
</dbReference>
<dbReference type="GO" id="GO:0006816">
    <property type="term" value="P:calcium ion transport"/>
    <property type="evidence" value="ECO:0000250"/>
    <property type="project" value="UniProtKB"/>
</dbReference>
<dbReference type="GO" id="GO:0007166">
    <property type="term" value="P:cell surface receptor signaling pathway"/>
    <property type="evidence" value="ECO:0000250"/>
    <property type="project" value="UniProtKB"/>
</dbReference>
<dbReference type="GO" id="GO:0071277">
    <property type="term" value="P:cellular response to calcium ion"/>
    <property type="evidence" value="ECO:0000250"/>
    <property type="project" value="UniProtKB"/>
</dbReference>
<dbReference type="GO" id="GO:0050982">
    <property type="term" value="P:detection of mechanical stimulus"/>
    <property type="evidence" value="ECO:0000318"/>
    <property type="project" value="GO_Central"/>
</dbReference>
<dbReference type="GO" id="GO:0098662">
    <property type="term" value="P:inorganic cation transmembrane transport"/>
    <property type="evidence" value="ECO:0000250"/>
    <property type="project" value="UniProtKB"/>
</dbReference>
<dbReference type="GO" id="GO:0071805">
    <property type="term" value="P:potassium ion transmembrane transport"/>
    <property type="evidence" value="ECO:0000250"/>
    <property type="project" value="UniProtKB"/>
</dbReference>
<dbReference type="GO" id="GO:0006813">
    <property type="term" value="P:potassium ion transport"/>
    <property type="evidence" value="ECO:0000250"/>
    <property type="project" value="UniProtKB"/>
</dbReference>
<dbReference type="GO" id="GO:0051290">
    <property type="term" value="P:protein heterotetramerization"/>
    <property type="evidence" value="ECO:0000250"/>
    <property type="project" value="UniProtKB"/>
</dbReference>
<dbReference type="GO" id="GO:0051262">
    <property type="term" value="P:protein tetramerization"/>
    <property type="evidence" value="ECO:0000250"/>
    <property type="project" value="UniProtKB"/>
</dbReference>
<dbReference type="GO" id="GO:0051209">
    <property type="term" value="P:release of sequestered calcium ion into cytosol"/>
    <property type="evidence" value="ECO:0000318"/>
    <property type="project" value="GO_Central"/>
</dbReference>
<dbReference type="GO" id="GO:0006814">
    <property type="term" value="P:sodium ion transport"/>
    <property type="evidence" value="ECO:0000250"/>
    <property type="project" value="UniProtKB"/>
</dbReference>
<dbReference type="FunFam" id="1.20.120.350:FF:000080">
    <property type="entry name" value="Polycystic kidney disease 2"/>
    <property type="match status" value="1"/>
</dbReference>
<dbReference type="FunFam" id="1.10.287.70:FF:000055">
    <property type="entry name" value="Polycystic kidney disease 2-like 1"/>
    <property type="match status" value="1"/>
</dbReference>
<dbReference type="FunFam" id="1.10.238.10:FF:000228">
    <property type="entry name" value="polycystin-2 isoform X1"/>
    <property type="match status" value="1"/>
</dbReference>
<dbReference type="FunFam" id="1.20.5.340:FF:000020">
    <property type="entry name" value="polycystin-2 isoform X1"/>
    <property type="match status" value="1"/>
</dbReference>
<dbReference type="Gene3D" id="1.10.287.70">
    <property type="match status" value="1"/>
</dbReference>
<dbReference type="Gene3D" id="1.20.5.340">
    <property type="match status" value="1"/>
</dbReference>
<dbReference type="Gene3D" id="1.10.238.10">
    <property type="entry name" value="EF-hand"/>
    <property type="match status" value="1"/>
</dbReference>
<dbReference type="Gene3D" id="1.20.120.350">
    <property type="entry name" value="Voltage-gated potassium channels. Chain C"/>
    <property type="match status" value="1"/>
</dbReference>
<dbReference type="InterPro" id="IPR011992">
    <property type="entry name" value="EF-hand-dom_pair"/>
</dbReference>
<dbReference type="InterPro" id="IPR002048">
    <property type="entry name" value="EF_hand_dom"/>
</dbReference>
<dbReference type="InterPro" id="IPR013122">
    <property type="entry name" value="PKD1_2_channel"/>
</dbReference>
<dbReference type="InterPro" id="IPR003915">
    <property type="entry name" value="PKD_2"/>
</dbReference>
<dbReference type="InterPro" id="IPR051223">
    <property type="entry name" value="Polycystin"/>
</dbReference>
<dbReference type="InterPro" id="IPR046791">
    <property type="entry name" value="Polycystin_dom"/>
</dbReference>
<dbReference type="InterPro" id="IPR027359">
    <property type="entry name" value="Volt_channel_dom_sf"/>
</dbReference>
<dbReference type="PANTHER" id="PTHR10877">
    <property type="entry name" value="POLYCYSTIN FAMILY MEMBER"/>
    <property type="match status" value="1"/>
</dbReference>
<dbReference type="PANTHER" id="PTHR10877:SF114">
    <property type="entry name" value="POLYCYSTIN-2"/>
    <property type="match status" value="1"/>
</dbReference>
<dbReference type="Pfam" id="PF18109">
    <property type="entry name" value="Fer4_24"/>
    <property type="match status" value="1"/>
</dbReference>
<dbReference type="Pfam" id="PF08016">
    <property type="entry name" value="PKD_channel"/>
    <property type="match status" value="1"/>
</dbReference>
<dbReference type="Pfam" id="PF20519">
    <property type="entry name" value="Polycystin_dom"/>
    <property type="match status" value="1"/>
</dbReference>
<dbReference type="PRINTS" id="PR01433">
    <property type="entry name" value="POLYCYSTIN2"/>
</dbReference>
<dbReference type="SUPFAM" id="SSF47473">
    <property type="entry name" value="EF-hand"/>
    <property type="match status" value="1"/>
</dbReference>
<dbReference type="SUPFAM" id="SSF81324">
    <property type="entry name" value="Voltage-gated potassium channels"/>
    <property type="match status" value="1"/>
</dbReference>
<dbReference type="PROSITE" id="PS50222">
    <property type="entry name" value="EF_HAND_2"/>
    <property type="match status" value="1"/>
</dbReference>